<evidence type="ECO:0000250" key="1">
    <source>
        <dbReference type="UniProtKB" id="A1L314"/>
    </source>
</evidence>
<evidence type="ECO:0000250" key="2">
    <source>
        <dbReference type="UniProtKB" id="Q2M385"/>
    </source>
</evidence>
<evidence type="ECO:0000255" key="3"/>
<evidence type="ECO:0000255" key="4">
    <source>
        <dbReference type="PROSITE-ProRule" id="PRU00745"/>
    </source>
</evidence>
<evidence type="ECO:0000256" key="5">
    <source>
        <dbReference type="SAM" id="MobiDB-lite"/>
    </source>
</evidence>
<evidence type="ECO:0000305" key="6"/>
<keyword id="KW-1064">Adaptive immunity</keyword>
<keyword id="KW-0968">Cytoplasmic vesicle</keyword>
<keyword id="KW-1015">Disulfide bond</keyword>
<keyword id="KW-0325">Glycoprotein</keyword>
<keyword id="KW-0391">Immunity</keyword>
<keyword id="KW-0399">Innate immunity</keyword>
<keyword id="KW-0472">Membrane</keyword>
<keyword id="KW-1185">Reference proteome</keyword>
<keyword id="KW-0732">Signal</keyword>
<keyword id="KW-0812">Transmembrane</keyword>
<keyword id="KW-1134">Transmembrane beta strand</keyword>
<keyword id="KW-1133">Transmembrane helix</keyword>
<keyword id="KW-0832">Ubl conjugation</keyword>
<accession>Q9WV57</accession>
<dbReference type="EMBL" id="AABR03005343">
    <property type="status" value="NOT_ANNOTATED_CDS"/>
    <property type="molecule type" value="Genomic_DNA"/>
</dbReference>
<dbReference type="EMBL" id="AF156540">
    <property type="protein sequence ID" value="AAD38417.1"/>
    <property type="status" value="ALT_FRAME"/>
    <property type="molecule type" value="mRNA"/>
</dbReference>
<dbReference type="SMR" id="Q9WV57"/>
<dbReference type="FunCoup" id="Q9WV57">
    <property type="interactions" value="46"/>
</dbReference>
<dbReference type="GlyCosmos" id="Q9WV57">
    <property type="glycosylation" value="3 sites, No reported glycans"/>
</dbReference>
<dbReference type="GlyGen" id="Q9WV57">
    <property type="glycosylation" value="3 sites"/>
</dbReference>
<dbReference type="PhosphoSitePlus" id="Q9WV57"/>
<dbReference type="PaxDb" id="10116-ENSRNOP00000066960"/>
<dbReference type="UCSC" id="RGD:69275">
    <property type="organism name" value="rat"/>
</dbReference>
<dbReference type="AGR" id="RGD:69275"/>
<dbReference type="RGD" id="69275">
    <property type="gene designation" value="Mpeg1"/>
</dbReference>
<dbReference type="eggNOG" id="ENOG502QRKR">
    <property type="taxonomic scope" value="Eukaryota"/>
</dbReference>
<dbReference type="InParanoid" id="Q9WV57"/>
<dbReference type="PhylomeDB" id="Q9WV57"/>
<dbReference type="PRO" id="PR:Q9WV57"/>
<dbReference type="Proteomes" id="UP000002494">
    <property type="component" value="Unplaced"/>
</dbReference>
<dbReference type="GO" id="GO:0031410">
    <property type="term" value="C:cytoplasmic vesicle"/>
    <property type="evidence" value="ECO:0000250"/>
    <property type="project" value="UniProtKB"/>
</dbReference>
<dbReference type="GO" id="GO:0036019">
    <property type="term" value="C:endolysosome"/>
    <property type="evidence" value="ECO:0000266"/>
    <property type="project" value="RGD"/>
</dbReference>
<dbReference type="GO" id="GO:0045335">
    <property type="term" value="C:phagocytic vesicle"/>
    <property type="evidence" value="ECO:0000250"/>
    <property type="project" value="UniProtKB"/>
</dbReference>
<dbReference type="GO" id="GO:0030670">
    <property type="term" value="C:phagocytic vesicle membrane"/>
    <property type="evidence" value="ECO:0000250"/>
    <property type="project" value="UniProtKB"/>
</dbReference>
<dbReference type="GO" id="GO:0061474">
    <property type="term" value="C:phagolysosome membrane"/>
    <property type="evidence" value="ECO:0000250"/>
    <property type="project" value="UniProtKB"/>
</dbReference>
<dbReference type="GO" id="GO:0140911">
    <property type="term" value="F:pore-forming activity"/>
    <property type="evidence" value="ECO:0000266"/>
    <property type="project" value="RGD"/>
</dbReference>
<dbReference type="GO" id="GO:0022829">
    <property type="term" value="F:wide pore channel activity"/>
    <property type="evidence" value="ECO:0000250"/>
    <property type="project" value="UniProtKB"/>
</dbReference>
<dbReference type="GO" id="GO:0002250">
    <property type="term" value="P:adaptive immune response"/>
    <property type="evidence" value="ECO:0007669"/>
    <property type="project" value="UniProtKB-KW"/>
</dbReference>
<dbReference type="GO" id="GO:0140367">
    <property type="term" value="P:antibacterial innate immune response"/>
    <property type="evidence" value="ECO:0000250"/>
    <property type="project" value="UniProtKB"/>
</dbReference>
<dbReference type="GO" id="GO:0002478">
    <property type="term" value="P:antigen processing and presentation of exogenous peptide antigen"/>
    <property type="evidence" value="ECO:0000250"/>
    <property type="project" value="UniProtKB"/>
</dbReference>
<dbReference type="GO" id="GO:0042590">
    <property type="term" value="P:antigen processing and presentation of exogenous peptide antigen via MHC class I"/>
    <property type="evidence" value="ECO:0000250"/>
    <property type="project" value="UniProtKB"/>
</dbReference>
<dbReference type="GO" id="GO:0042742">
    <property type="term" value="P:defense response to bacterium"/>
    <property type="evidence" value="ECO:0000250"/>
    <property type="project" value="UniProtKB"/>
</dbReference>
<dbReference type="GO" id="GO:0050829">
    <property type="term" value="P:defense response to Gram-negative bacterium"/>
    <property type="evidence" value="ECO:0000250"/>
    <property type="project" value="UniProtKB"/>
</dbReference>
<dbReference type="GO" id="GO:0050830">
    <property type="term" value="P:defense response to Gram-positive bacterium"/>
    <property type="evidence" value="ECO:0000250"/>
    <property type="project" value="UniProtKB"/>
</dbReference>
<dbReference type="GO" id="GO:0002468">
    <property type="term" value="P:dendritic cell antigen processing and presentation"/>
    <property type="evidence" value="ECO:0000250"/>
    <property type="project" value="UniProtKB"/>
</dbReference>
<dbReference type="CDD" id="cd22579">
    <property type="entry name" value="MPEG1_P2"/>
    <property type="match status" value="1"/>
</dbReference>
<dbReference type="InterPro" id="IPR020864">
    <property type="entry name" value="MACPF"/>
</dbReference>
<dbReference type="InterPro" id="IPR039707">
    <property type="entry name" value="MPEG1"/>
</dbReference>
<dbReference type="PANTHER" id="PTHR31463">
    <property type="entry name" value="MACROPHAGE-EXPRESSED GENE 1 PROTEIN"/>
    <property type="match status" value="1"/>
</dbReference>
<dbReference type="PANTHER" id="PTHR31463:SF4">
    <property type="entry name" value="MACROPHAGE-EXPRESSED GENE 1 PROTEIN"/>
    <property type="match status" value="1"/>
</dbReference>
<dbReference type="Pfam" id="PF01823">
    <property type="entry name" value="MACPF"/>
    <property type="match status" value="1"/>
</dbReference>
<dbReference type="SMART" id="SM00457">
    <property type="entry name" value="MACPF"/>
    <property type="match status" value="1"/>
</dbReference>
<dbReference type="PROSITE" id="PS51412">
    <property type="entry name" value="MACPF_2"/>
    <property type="match status" value="1"/>
</dbReference>
<gene>
    <name type="primary">Mpeg1</name>
</gene>
<feature type="signal peptide" evidence="3">
    <location>
        <begin position="1"/>
        <end position="19"/>
    </location>
</feature>
<feature type="chain" id="PRO_0000324145" description="Macrophage-expressed gene 1 protein">
    <location>
        <begin position="20"/>
        <end position="714"/>
    </location>
</feature>
<feature type="chain" id="PRO_0000459025" description="Macrophage-expressed gene 1 protein, processed form" evidence="1">
    <location>
        <begin position="353"/>
        <end position="629"/>
    </location>
</feature>
<feature type="transmembrane region" description="Beta stranded" evidence="1">
    <location>
        <begin position="113"/>
        <end position="120"/>
    </location>
</feature>
<feature type="transmembrane region" description="Beta stranded" evidence="1">
    <location>
        <begin position="127"/>
        <end position="132"/>
    </location>
</feature>
<feature type="transmembrane region" description="Beta stranded" evidence="1">
    <location>
        <begin position="235"/>
        <end position="244"/>
    </location>
</feature>
<feature type="transmembrane region" description="Beta stranded" evidence="1">
    <location>
        <begin position="248"/>
        <end position="256"/>
    </location>
</feature>
<feature type="transmembrane region" description="Helical" evidence="3">
    <location>
        <begin position="654"/>
        <end position="674"/>
    </location>
</feature>
<feature type="domain" description="MACPF" evidence="4">
    <location>
        <begin position="30"/>
        <end position="345"/>
    </location>
</feature>
<feature type="region of interest" description="P2" evidence="1">
    <location>
        <begin position="410"/>
        <end position="653"/>
    </location>
</feature>
<feature type="region of interest" description="Disordered" evidence="5">
    <location>
        <begin position="690"/>
        <end position="714"/>
    </location>
</feature>
<feature type="site" description="Cleavage; by LGMN" evidence="1">
    <location>
        <begin position="352"/>
        <end position="353"/>
    </location>
</feature>
<feature type="site" description="Cleavage; by LGMN" evidence="1">
    <location>
        <begin position="357"/>
        <end position="358"/>
    </location>
</feature>
<feature type="site" description="Cleavage; by LGMN" evidence="1">
    <location>
        <begin position="359"/>
        <end position="360"/>
    </location>
</feature>
<feature type="site" description="Cleavage; by trypsin" evidence="1">
    <location>
        <begin position="628"/>
        <end position="629"/>
    </location>
</feature>
<feature type="glycosylation site" description="N-linked (GlcNAc...) asparagine" evidence="3">
    <location>
        <position position="185"/>
    </location>
</feature>
<feature type="glycosylation site" description="N-linked (GlcNAc...) asparagine" evidence="3">
    <location>
        <position position="269"/>
    </location>
</feature>
<feature type="glycosylation site" description="N-linked (GlcNAc...) asparagine" evidence="3">
    <location>
        <position position="375"/>
    </location>
</feature>
<feature type="disulfide bond" evidence="1">
    <location>
        <begin position="34"/>
        <end position="70"/>
    </location>
</feature>
<feature type="disulfide bond" evidence="1">
    <location>
        <begin position="350"/>
        <end position="369"/>
    </location>
</feature>
<feature type="disulfide bond" evidence="1">
    <location>
        <begin position="385"/>
        <end position="394"/>
    </location>
</feature>
<feature type="disulfide bond" evidence="1">
    <location>
        <begin position="432"/>
        <end position="446"/>
    </location>
</feature>
<feature type="disulfide bond" evidence="1">
    <location>
        <begin position="436"/>
        <end position="442"/>
    </location>
</feature>
<feature type="disulfide bond" evidence="1">
    <location>
        <begin position="531"/>
        <end position="569"/>
    </location>
</feature>
<feature type="disulfide bond" evidence="1">
    <location>
        <begin position="554"/>
        <end position="574"/>
    </location>
</feature>
<reference key="1">
    <citation type="journal article" date="2004" name="Nature">
        <title>Genome sequence of the Brown Norway rat yields insights into mammalian evolution.</title>
        <authorList>
            <person name="Gibbs R.A."/>
            <person name="Weinstock G.M."/>
            <person name="Metzker M.L."/>
            <person name="Muzny D.M."/>
            <person name="Sodergren E.J."/>
            <person name="Scherer S."/>
            <person name="Scott G."/>
            <person name="Steffen D."/>
            <person name="Worley K.C."/>
            <person name="Burch P.E."/>
            <person name="Okwuonu G."/>
            <person name="Hines S."/>
            <person name="Lewis L."/>
            <person name="Deramo C."/>
            <person name="Delgado O."/>
            <person name="Dugan-Rocha S."/>
            <person name="Miner G."/>
            <person name="Morgan M."/>
            <person name="Hawes A."/>
            <person name="Gill R."/>
            <person name="Holt R.A."/>
            <person name="Adams M.D."/>
            <person name="Amanatides P.G."/>
            <person name="Baden-Tillson H."/>
            <person name="Barnstead M."/>
            <person name="Chin S."/>
            <person name="Evans C.A."/>
            <person name="Ferriera S."/>
            <person name="Fosler C."/>
            <person name="Glodek A."/>
            <person name="Gu Z."/>
            <person name="Jennings D."/>
            <person name="Kraft C.L."/>
            <person name="Nguyen T."/>
            <person name="Pfannkoch C.M."/>
            <person name="Sitter C."/>
            <person name="Sutton G.G."/>
            <person name="Venter J.C."/>
            <person name="Woodage T."/>
            <person name="Smith D."/>
            <person name="Lee H.-M."/>
            <person name="Gustafson E."/>
            <person name="Cahill P."/>
            <person name="Kana A."/>
            <person name="Doucette-Stamm L."/>
            <person name="Weinstock K."/>
            <person name="Fechtel K."/>
            <person name="Weiss R.B."/>
            <person name="Dunn D.M."/>
            <person name="Green E.D."/>
            <person name="Blakesley R.W."/>
            <person name="Bouffard G.G."/>
            <person name="De Jong P.J."/>
            <person name="Osoegawa K."/>
            <person name="Zhu B."/>
            <person name="Marra M."/>
            <person name="Schein J."/>
            <person name="Bosdet I."/>
            <person name="Fjell C."/>
            <person name="Jones S."/>
            <person name="Krzywinski M."/>
            <person name="Mathewson C."/>
            <person name="Siddiqui A."/>
            <person name="Wye N."/>
            <person name="McPherson J."/>
            <person name="Zhao S."/>
            <person name="Fraser C.M."/>
            <person name="Shetty J."/>
            <person name="Shatsman S."/>
            <person name="Geer K."/>
            <person name="Chen Y."/>
            <person name="Abramzon S."/>
            <person name="Nierman W.C."/>
            <person name="Havlak P.H."/>
            <person name="Chen R."/>
            <person name="Durbin K.J."/>
            <person name="Egan A."/>
            <person name="Ren Y."/>
            <person name="Song X.-Z."/>
            <person name="Li B."/>
            <person name="Liu Y."/>
            <person name="Qin X."/>
            <person name="Cawley S."/>
            <person name="Cooney A.J."/>
            <person name="D'Souza L.M."/>
            <person name="Martin K."/>
            <person name="Wu J.Q."/>
            <person name="Gonzalez-Garay M.L."/>
            <person name="Jackson A.R."/>
            <person name="Kalafus K.J."/>
            <person name="McLeod M.P."/>
            <person name="Milosavljevic A."/>
            <person name="Virk D."/>
            <person name="Volkov A."/>
            <person name="Wheeler D.A."/>
            <person name="Zhang Z."/>
            <person name="Bailey J.A."/>
            <person name="Eichler E.E."/>
            <person name="Tuzun E."/>
            <person name="Birney E."/>
            <person name="Mongin E."/>
            <person name="Ureta-Vidal A."/>
            <person name="Woodwark C."/>
            <person name="Zdobnov E."/>
            <person name="Bork P."/>
            <person name="Suyama M."/>
            <person name="Torrents D."/>
            <person name="Alexandersson M."/>
            <person name="Trask B.J."/>
            <person name="Young J.M."/>
            <person name="Huang H."/>
            <person name="Wang H."/>
            <person name="Xing H."/>
            <person name="Daniels S."/>
            <person name="Gietzen D."/>
            <person name="Schmidt J."/>
            <person name="Stevens K."/>
            <person name="Vitt U."/>
            <person name="Wingrove J."/>
            <person name="Camara F."/>
            <person name="Mar Alba M."/>
            <person name="Abril J.F."/>
            <person name="Guigo R."/>
            <person name="Smit A."/>
            <person name="Dubchak I."/>
            <person name="Rubin E.M."/>
            <person name="Couronne O."/>
            <person name="Poliakov A."/>
            <person name="Huebner N."/>
            <person name="Ganten D."/>
            <person name="Goesele C."/>
            <person name="Hummel O."/>
            <person name="Kreitler T."/>
            <person name="Lee Y.-A."/>
            <person name="Monti J."/>
            <person name="Schulz H."/>
            <person name="Zimdahl H."/>
            <person name="Himmelbauer H."/>
            <person name="Lehrach H."/>
            <person name="Jacob H.J."/>
            <person name="Bromberg S."/>
            <person name="Gullings-Handley J."/>
            <person name="Jensen-Seaman M.I."/>
            <person name="Kwitek A.E."/>
            <person name="Lazar J."/>
            <person name="Pasko D."/>
            <person name="Tonellato P.J."/>
            <person name="Twigger S."/>
            <person name="Ponting C.P."/>
            <person name="Duarte J.M."/>
            <person name="Rice S."/>
            <person name="Goodstadt L."/>
            <person name="Beatson S.A."/>
            <person name="Emes R.D."/>
            <person name="Winter E.E."/>
            <person name="Webber C."/>
            <person name="Brandt P."/>
            <person name="Nyakatura G."/>
            <person name="Adetobi M."/>
            <person name="Chiaromonte F."/>
            <person name="Elnitski L."/>
            <person name="Eswara P."/>
            <person name="Hardison R.C."/>
            <person name="Hou M."/>
            <person name="Kolbe D."/>
            <person name="Makova K."/>
            <person name="Miller W."/>
            <person name="Nekrutenko A."/>
            <person name="Riemer C."/>
            <person name="Schwartz S."/>
            <person name="Taylor J."/>
            <person name="Yang S."/>
            <person name="Zhang Y."/>
            <person name="Lindpaintner K."/>
            <person name="Andrews T.D."/>
            <person name="Caccamo M."/>
            <person name="Clamp M."/>
            <person name="Clarke L."/>
            <person name="Curwen V."/>
            <person name="Durbin R.M."/>
            <person name="Eyras E."/>
            <person name="Searle S.M."/>
            <person name="Cooper G.M."/>
            <person name="Batzoglou S."/>
            <person name="Brudno M."/>
            <person name="Sidow A."/>
            <person name="Stone E.A."/>
            <person name="Payseur B.A."/>
            <person name="Bourque G."/>
            <person name="Lopez-Otin C."/>
            <person name="Puente X.S."/>
            <person name="Chakrabarti K."/>
            <person name="Chatterji S."/>
            <person name="Dewey C."/>
            <person name="Pachter L."/>
            <person name="Bray N."/>
            <person name="Yap V.B."/>
            <person name="Caspi A."/>
            <person name="Tesler G."/>
            <person name="Pevzner P.A."/>
            <person name="Haussler D."/>
            <person name="Roskin K.M."/>
            <person name="Baertsch R."/>
            <person name="Clawson H."/>
            <person name="Furey T.S."/>
            <person name="Hinrichs A.S."/>
            <person name="Karolchik D."/>
            <person name="Kent W.J."/>
            <person name="Rosenbloom K.R."/>
            <person name="Trumbower H."/>
            <person name="Weirauch M."/>
            <person name="Cooper D.N."/>
            <person name="Stenson P.D."/>
            <person name="Ma B."/>
            <person name="Brent M."/>
            <person name="Arumugam M."/>
            <person name="Shteynberg D."/>
            <person name="Copley R.R."/>
            <person name="Taylor M.S."/>
            <person name="Riethman H."/>
            <person name="Mudunuri U."/>
            <person name="Peterson J."/>
            <person name="Guyer M."/>
            <person name="Felsenfeld A."/>
            <person name="Old S."/>
            <person name="Mockrin S."/>
            <person name="Collins F.S."/>
        </authorList>
    </citation>
    <scope>NUCLEOTIDE SEQUENCE [LARGE SCALE GENOMIC DNA]</scope>
    <source>
        <strain>Brown Norway</strain>
    </source>
</reference>
<reference key="2">
    <citation type="submission" date="1999-06" db="EMBL/GenBank/DDBJ databases">
        <title>Immunoneutralization of the macrophage gene-1 product attenuates renal injury in experimental glomerulonephritis in WKY rats.</title>
        <authorList>
            <person name="Chen S."/>
            <person name="Garcia G.E."/>
            <person name="Xia Y."/>
            <person name="Wilson C.B."/>
            <person name="Ku G."/>
            <person name="Feng L."/>
        </authorList>
    </citation>
    <scope>NUCLEOTIDE SEQUENCE [MRNA] OF 1-708</scope>
    <source>
        <strain>Sprague-Dawley</strain>
    </source>
</reference>
<comment type="function">
    <text evidence="1">Pore-forming protein involved in both innate and adaptive immunity. Plays a central role in antigen cross-presentation in dendritic cells by forming a pore in antigen-containing compartments, thereby promoting delivery of antigens for cross-presentation. Also involved in innate immune response following bacterial infection; shows antibacterial activity against a wide spectrum of Gram-positive, Gram-negative and acid-fast bacteria. Reduces the viability of the intracytosolic pathogen L.monocytogenes by inhibiting acidification of the phagocytic vacuole of host cells which restricts bacterial translocation from the vacuole to the cytosol. Required for the antibacterial activity of reactive oxygen species and nitric oxide.</text>
</comment>
<comment type="function">
    <molecule>Macrophage-expressed gene 1 protein, processed form</molecule>
    <text evidence="1">Pore-forming protein that plays a central role in antigen cross-presentation in dendritic cells by mediating delivery of antigens for cross-presentation. Dendritic cells bridge innate and adaptive immunity by capturing exogenous antigens on MHC class-I molecules and presenting them to naive CD8(+) T-cells. Acts by forming a pore in antigen-containing compartments, promoting the release of antigens into the cytosol, enabling generation of MHCI:peptide complexes and T-cell priming.</text>
</comment>
<comment type="activity regulation">
    <text evidence="1">Forms arc- and ring-shaped pre-pores on top of the membrane at neutral to slightly acidic pH conditions and converts to pores upon acidification. Undergoes transition from the pre-pore to the pore in a processive clockwise hand-over-hand process. In the pore state, 2 alpha-helical regions refold into transmembrane hairpins (TMH1 and TMH2) in each protomer that form in the ensemble complex giant beta-barrel transmembrane pores.</text>
</comment>
<comment type="subunit">
    <text evidence="1">Homooligomer; predominantly forms a homooligomeric arc-shaped pore complex instead of complete rings of 16 subunits.</text>
</comment>
<comment type="subcellular location">
    <subcellularLocation>
        <location evidence="1">Cytoplasmic vesicle membrane</location>
        <topology evidence="1">Multi-pass membrane protein</topology>
    </subcellularLocation>
    <text evidence="1">Bacterial infection induces translocation of the cytoplasmic vesicles to bacterium-containing phagocytic vesicles and fusing of the vesicles.</text>
</comment>
<comment type="subcellular location">
    <molecule>Macrophage-expressed gene 1 protein, processed form</molecule>
    <subcellularLocation>
        <location evidence="1">Cytoplasmic vesicle</location>
        <location evidence="1">Phagosome membrane</location>
        <topology evidence="1">Multi-pass membrane protein</topology>
    </subcellularLocation>
    <text evidence="1">Proteolytically processed in lysosomes, leading to its maturation and forms pores in the membrane of antigen-containing phagosomes.</text>
</comment>
<comment type="domain">
    <text evidence="1">The MACPF domain includes the central machinery of pore formation: acidification causes a significant structural rearrangement, leading to oligomerization and deployment of the transmembrane beta-strands (named TMH1 and TMH2) that enter the membrane as amphipathic beta-hairpins.</text>
</comment>
<comment type="domain">
    <text evidence="1">The P2 region contains beta-hairpins to interact with target membranes.</text>
</comment>
<comment type="PTM">
    <text evidence="1">Proteolytically processed in two steps to generate the Macrophage-expressed gene 1 protein, processed form: cleaved by trypsin in proximity of the helical transmembrane domain releases the ectodomain into the lysosomal lumen to orient the pore-forming domain toward the endogenous membranes, and processed by the asparagine endopeptidase (LGMN). Proteolytic processing in antigen-containing vesicles is pH-dependent.</text>
</comment>
<comment type="PTM">
    <text evidence="1">Monoubiquitinated in response to bacterial infection; ubiquitination is required for vesicular localization and antibacterial activity and can be blocked by bacterial cell cycle inhibiting factor (cif).</text>
</comment>
<comment type="similarity">
    <text evidence="6">Belongs to the MPEG1 family.</text>
</comment>
<comment type="sequence caution" evidence="6">
    <conflict type="frameshift">
        <sequence resource="EMBL-CDS" id="AAD38417"/>
    </conflict>
</comment>
<protein>
    <recommendedName>
        <fullName>Macrophage-expressed gene 1 protein</fullName>
        <shortName>Macrophage gene 1 protein</shortName>
        <shortName>Mpg-1</shortName>
    </recommendedName>
    <alternativeName>
        <fullName evidence="2">Perforin-2</fullName>
        <shortName evidence="2">P-2</shortName>
    </alternativeName>
    <component>
        <recommendedName>
            <fullName evidence="6">Macrophage-expressed gene 1 protein, processed form</fullName>
        </recommendedName>
    </component>
</protein>
<organism>
    <name type="scientific">Rattus norvegicus</name>
    <name type="common">Rat</name>
    <dbReference type="NCBI Taxonomy" id="10116"/>
    <lineage>
        <taxon>Eukaryota</taxon>
        <taxon>Metazoa</taxon>
        <taxon>Chordata</taxon>
        <taxon>Craniata</taxon>
        <taxon>Vertebrata</taxon>
        <taxon>Euteleostomi</taxon>
        <taxon>Mammalia</taxon>
        <taxon>Eutheria</taxon>
        <taxon>Euarchontoglires</taxon>
        <taxon>Glires</taxon>
        <taxon>Rodentia</taxon>
        <taxon>Myomorpha</taxon>
        <taxon>Muroidea</taxon>
        <taxon>Muridae</taxon>
        <taxon>Murinae</taxon>
        <taxon>Rattus</taxon>
    </lineage>
</organism>
<proteinExistence type="evidence at transcript level"/>
<name>MPEG1_RAT</name>
<sequence length="714" mass="78527">MNSFMAIALIWMMIACAEADKPLRDPGMTGFQTCKDTLKLPVLEVLPGGGWDNLRNIDMGRVIDLTYTNCKTTEDGQYIIPDEVYTIPQKESNLEMNSEIRDSWVNYQSTTSFSINTELSLFSKVNGKFSTEFQRMKTLQVKDQAVTTRVQVRNRIYTVKNSPTSELSFGFTNALMDICDQLEKNQTKMATYLAELLVLNYGTHVITSVDAGAALVQEDHIRSSFLLDNQNSENTVTASAGIAFLNIVNFKVETDHTSQTLLTKSYLSNRTNSRVQSFGGIPFYPGITLETWQKGITNHLVAIDRAGLPLHFFIKPDKLPGLPGGLVKKLSKTVETAVRHYYTFNTHPGCTNVDSPNFNFQANMEDDSCDAKVTNFTFGGLYQECTELSGDALCQNLEQKNLLTGDFSCPSGYTPVHLLSQTHEEGYSRLECKKKCTLKIFCKTVCEDVFRVAKAQFRAYWCVATGQVPDNSGLLFGGLFTDKSINPMTNAQSCPAGYIPLNLFESLKVCVSLDYELGYKFSVPFGGFFSCIMGNPLVNSDTAKDIGAPSLKKCPGGFSQHLAVISDGCQVSYCVKAGIFTGGSLLPVRLPPYTKPPLMSQVATNTVIVTSSETARSWIKDPQTNQWKLGEPLELHKAMTVIHGDGNGMSGGEAAGVTLGVIIALGIVITLAIYSTRKYKKEKEYQEIEEQESLVGSFATDASPPNGEQDPCPA</sequence>